<name>RBL_THANO</name>
<proteinExistence type="inferred from homology"/>
<comment type="function">
    <text evidence="1">RuBisCO catalyzes two reactions: the carboxylation of D-ribulose 1,5-bisphosphate, the primary event in carbon dioxide fixation, as well as the oxidative fragmentation of the pentose substrate in the photorespiration process. Both reactions occur simultaneously and in competition at the same active site.</text>
</comment>
<comment type="catalytic activity">
    <reaction evidence="1">
        <text>2 (2R)-3-phosphoglycerate + 2 H(+) = D-ribulose 1,5-bisphosphate + CO2 + H2O</text>
        <dbReference type="Rhea" id="RHEA:23124"/>
        <dbReference type="ChEBI" id="CHEBI:15377"/>
        <dbReference type="ChEBI" id="CHEBI:15378"/>
        <dbReference type="ChEBI" id="CHEBI:16526"/>
        <dbReference type="ChEBI" id="CHEBI:57870"/>
        <dbReference type="ChEBI" id="CHEBI:58272"/>
        <dbReference type="EC" id="4.1.1.39"/>
    </reaction>
</comment>
<comment type="catalytic activity">
    <reaction evidence="1">
        <text>D-ribulose 1,5-bisphosphate + O2 = 2-phosphoglycolate + (2R)-3-phosphoglycerate + 2 H(+)</text>
        <dbReference type="Rhea" id="RHEA:36631"/>
        <dbReference type="ChEBI" id="CHEBI:15378"/>
        <dbReference type="ChEBI" id="CHEBI:15379"/>
        <dbReference type="ChEBI" id="CHEBI:57870"/>
        <dbReference type="ChEBI" id="CHEBI:58033"/>
        <dbReference type="ChEBI" id="CHEBI:58272"/>
    </reaction>
</comment>
<comment type="cofactor">
    <cofactor evidence="1">
        <name>Mg(2+)</name>
        <dbReference type="ChEBI" id="CHEBI:18420"/>
    </cofactor>
    <text evidence="1">Binds 1 Mg(2+) ion per subunit.</text>
</comment>
<comment type="subunit">
    <text evidence="1">Heterohexadecamer of 8 large chains and 8 small chains.</text>
</comment>
<comment type="subcellular location">
    <subcellularLocation>
        <location>Plastid</location>
        <location>Chloroplast</location>
    </subcellularLocation>
</comment>
<comment type="miscellaneous">
    <text evidence="1">The basic functional RuBisCO is composed of a large chain homodimer in a 'head-to-tail' conformation. In form I RuBisCO this homodimer is arranged in a barrel-like tetramer with the small subunits forming a tetrameric 'cap' on each end of the 'barrel'.</text>
</comment>
<comment type="similarity">
    <text evidence="1">Belongs to the RuBisCO large chain family. Type I subfamily.</text>
</comment>
<feature type="chain" id="PRO_0000062604" description="Ribulose bisphosphate carboxylase large chain">
    <location>
        <begin position="1"/>
        <end position="490"/>
    </location>
</feature>
<feature type="active site" description="Proton acceptor" evidence="1">
    <location>
        <position position="179"/>
    </location>
</feature>
<feature type="active site" description="Proton acceptor" evidence="1">
    <location>
        <position position="297"/>
    </location>
</feature>
<feature type="binding site" description="in homodimeric partner" evidence="1">
    <location>
        <position position="127"/>
    </location>
    <ligand>
        <name>substrate</name>
    </ligand>
</feature>
<feature type="binding site" evidence="1">
    <location>
        <position position="177"/>
    </location>
    <ligand>
        <name>substrate</name>
    </ligand>
</feature>
<feature type="binding site" evidence="1">
    <location>
        <position position="181"/>
    </location>
    <ligand>
        <name>substrate</name>
    </ligand>
</feature>
<feature type="binding site" description="via carbamate group" evidence="1">
    <location>
        <position position="205"/>
    </location>
    <ligand>
        <name>Mg(2+)</name>
        <dbReference type="ChEBI" id="CHEBI:18420"/>
    </ligand>
</feature>
<feature type="binding site" evidence="1">
    <location>
        <position position="207"/>
    </location>
    <ligand>
        <name>Mg(2+)</name>
        <dbReference type="ChEBI" id="CHEBI:18420"/>
    </ligand>
</feature>
<feature type="binding site" evidence="1">
    <location>
        <position position="208"/>
    </location>
    <ligand>
        <name>Mg(2+)</name>
        <dbReference type="ChEBI" id="CHEBI:18420"/>
    </ligand>
</feature>
<feature type="binding site" evidence="1">
    <location>
        <position position="298"/>
    </location>
    <ligand>
        <name>substrate</name>
    </ligand>
</feature>
<feature type="binding site" evidence="1">
    <location>
        <position position="330"/>
    </location>
    <ligand>
        <name>substrate</name>
    </ligand>
</feature>
<feature type="binding site" evidence="1">
    <location>
        <position position="382"/>
    </location>
    <ligand>
        <name>substrate</name>
    </ligand>
</feature>
<feature type="site" description="Transition state stabilizer" evidence="1">
    <location>
        <position position="337"/>
    </location>
</feature>
<feature type="modified residue" description="N6-carboxylysine" evidence="1">
    <location>
        <position position="205"/>
    </location>
</feature>
<organism>
    <name type="scientific">Thalassiosira nordenskioeldii</name>
    <name type="common">Marine diatom</name>
    <dbReference type="NCBI Taxonomy" id="83372"/>
    <lineage>
        <taxon>Eukaryota</taxon>
        <taxon>Sar</taxon>
        <taxon>Stramenopiles</taxon>
        <taxon>Ochrophyta</taxon>
        <taxon>Bacillariophyta</taxon>
        <taxon>Coscinodiscophyceae</taxon>
        <taxon>Thalassiosirophycidae</taxon>
        <taxon>Thalassiosirales</taxon>
        <taxon>Thalassiosiraceae</taxon>
        <taxon>Thalassiosira</taxon>
    </lineage>
</organism>
<reference key="1">
    <citation type="submission" date="1998-09" db="EMBL/GenBank/DDBJ databases">
        <title>Structure and function study of ribulose-1,5-bisphosphate carboxylase/oxygenase of the marine diatom, Thalassiosira nordenskioeldii.</title>
        <authorList>
            <person name="Tomizawa K."/>
        </authorList>
    </citation>
    <scope>NUCLEOTIDE SEQUENCE [GENOMIC DNA]</scope>
</reference>
<keyword id="KW-0113">Calvin cycle</keyword>
<keyword id="KW-0120">Carbon dioxide fixation</keyword>
<keyword id="KW-0150">Chloroplast</keyword>
<keyword id="KW-0456">Lyase</keyword>
<keyword id="KW-0460">Magnesium</keyword>
<keyword id="KW-0479">Metal-binding</keyword>
<keyword id="KW-0503">Monooxygenase</keyword>
<keyword id="KW-0560">Oxidoreductase</keyword>
<keyword id="KW-0601">Photorespiration</keyword>
<keyword id="KW-0602">Photosynthesis</keyword>
<keyword id="KW-0934">Plastid</keyword>
<dbReference type="EC" id="4.1.1.39" evidence="1"/>
<dbReference type="EMBL" id="AB018007">
    <property type="protein sequence ID" value="BAA75794.1"/>
    <property type="molecule type" value="Genomic_DNA"/>
</dbReference>
<dbReference type="SMR" id="O98947"/>
<dbReference type="GO" id="GO:0009507">
    <property type="term" value="C:chloroplast"/>
    <property type="evidence" value="ECO:0007669"/>
    <property type="project" value="UniProtKB-SubCell"/>
</dbReference>
<dbReference type="GO" id="GO:0000287">
    <property type="term" value="F:magnesium ion binding"/>
    <property type="evidence" value="ECO:0007669"/>
    <property type="project" value="UniProtKB-UniRule"/>
</dbReference>
<dbReference type="GO" id="GO:0004497">
    <property type="term" value="F:monooxygenase activity"/>
    <property type="evidence" value="ECO:0007669"/>
    <property type="project" value="UniProtKB-KW"/>
</dbReference>
<dbReference type="GO" id="GO:0016984">
    <property type="term" value="F:ribulose-bisphosphate carboxylase activity"/>
    <property type="evidence" value="ECO:0007669"/>
    <property type="project" value="UniProtKB-UniRule"/>
</dbReference>
<dbReference type="GO" id="GO:0019253">
    <property type="term" value="P:reductive pentose-phosphate cycle"/>
    <property type="evidence" value="ECO:0007669"/>
    <property type="project" value="UniProtKB-UniRule"/>
</dbReference>
<dbReference type="CDD" id="cd08212">
    <property type="entry name" value="RuBisCO_large_I"/>
    <property type="match status" value="1"/>
</dbReference>
<dbReference type="Gene3D" id="3.20.20.110">
    <property type="entry name" value="Ribulose bisphosphate carboxylase, large subunit, C-terminal domain"/>
    <property type="match status" value="1"/>
</dbReference>
<dbReference type="Gene3D" id="3.30.70.150">
    <property type="entry name" value="RuBisCO large subunit, N-terminal domain"/>
    <property type="match status" value="1"/>
</dbReference>
<dbReference type="HAMAP" id="MF_01338">
    <property type="entry name" value="RuBisCO_L_type1"/>
    <property type="match status" value="1"/>
</dbReference>
<dbReference type="InterPro" id="IPR033966">
    <property type="entry name" value="RuBisCO"/>
</dbReference>
<dbReference type="InterPro" id="IPR020878">
    <property type="entry name" value="RuBisCo_large_chain_AS"/>
</dbReference>
<dbReference type="InterPro" id="IPR000685">
    <property type="entry name" value="RuBisCO_lsu_C"/>
</dbReference>
<dbReference type="InterPro" id="IPR036376">
    <property type="entry name" value="RuBisCO_lsu_C_sf"/>
</dbReference>
<dbReference type="InterPro" id="IPR017443">
    <property type="entry name" value="RuBisCO_lsu_fd_N"/>
</dbReference>
<dbReference type="InterPro" id="IPR036422">
    <property type="entry name" value="RuBisCO_lsu_N_sf"/>
</dbReference>
<dbReference type="InterPro" id="IPR020888">
    <property type="entry name" value="RuBisCO_lsuI"/>
</dbReference>
<dbReference type="NCBIfam" id="NF003252">
    <property type="entry name" value="PRK04208.1"/>
    <property type="match status" value="1"/>
</dbReference>
<dbReference type="PANTHER" id="PTHR42704">
    <property type="entry name" value="RIBULOSE BISPHOSPHATE CARBOXYLASE"/>
    <property type="match status" value="1"/>
</dbReference>
<dbReference type="PANTHER" id="PTHR42704:SF17">
    <property type="entry name" value="RIBULOSE BISPHOSPHATE CARBOXYLASE LARGE CHAIN"/>
    <property type="match status" value="1"/>
</dbReference>
<dbReference type="Pfam" id="PF00016">
    <property type="entry name" value="RuBisCO_large"/>
    <property type="match status" value="1"/>
</dbReference>
<dbReference type="Pfam" id="PF02788">
    <property type="entry name" value="RuBisCO_large_N"/>
    <property type="match status" value="1"/>
</dbReference>
<dbReference type="SFLD" id="SFLDG01052">
    <property type="entry name" value="RuBisCO"/>
    <property type="match status" value="1"/>
</dbReference>
<dbReference type="SFLD" id="SFLDS00014">
    <property type="entry name" value="RuBisCO"/>
    <property type="match status" value="1"/>
</dbReference>
<dbReference type="SFLD" id="SFLDG00301">
    <property type="entry name" value="RuBisCO-like_proteins"/>
    <property type="match status" value="1"/>
</dbReference>
<dbReference type="SUPFAM" id="SSF51649">
    <property type="entry name" value="RuBisCo, C-terminal domain"/>
    <property type="match status" value="1"/>
</dbReference>
<dbReference type="SUPFAM" id="SSF54966">
    <property type="entry name" value="RuBisCO, large subunit, small (N-terminal) domain"/>
    <property type="match status" value="1"/>
</dbReference>
<dbReference type="PROSITE" id="PS00157">
    <property type="entry name" value="RUBISCO_LARGE"/>
    <property type="match status" value="1"/>
</dbReference>
<evidence type="ECO:0000255" key="1">
    <source>
        <dbReference type="HAMAP-Rule" id="MF_01338"/>
    </source>
</evidence>
<accession>O98947</accession>
<gene>
    <name evidence="1" type="primary">rbcL</name>
</gene>
<sequence length="490" mass="54193">MSQSVSERTRIKSDRYESGVIPYAKMGYWDAAYTVKDTDVLALFRITPQPGVDPVEAAAAVAGESSTATWTVVWTDLLTACERYRAKAYRVDPVPNSPDVYLAFNAYECDLFEEASLSNLTASIIGNVFGFKAVAALRLEDMRIPHSYLKTFQGPATGIVVERERLNKYGTPLLGATVKPKLGLSGKNYGRVVYEGLKGGLDFLKDDENINSQPFMRWRERFLNCLEGINRAAAATGEVKGSYLNITAATMEEVYKRAEYAKAIGSVLVMIDLVMGYTAIQSIAYWARENDMLLHLHRAGNSTYARQKNHGINFRVFCKWMRMSGVDHIHAGTVVGKLEGDPLMIKGFYDILRLTELEVNLPFGVFFEMDWASLRRCMPVASGGIHCGQMHQLIHYLGDDVVLQFGGGTIGHPDGIQAGATANRVALEAMVFSRNEGADFFNNQVGPQILRDAAKTCGPLQTALDLWKDISFNYTSTDTADFAETATANR</sequence>
<protein>
    <recommendedName>
        <fullName evidence="1">Ribulose bisphosphate carboxylase large chain</fullName>
        <shortName evidence="1">RuBisCO large subunit</shortName>
        <ecNumber evidence="1">4.1.1.39</ecNumber>
    </recommendedName>
</protein>
<geneLocation type="chloroplast"/>